<reference key="1">
    <citation type="journal article" date="1999" name="Trends Plant Sci.">
        <title>Plant thioredoxins and glutaredoxins: identity and putative roles.</title>
        <authorList>
            <person name="Meyer Y."/>
            <person name="Verdoucq L."/>
            <person name="Vignols F."/>
        </authorList>
    </citation>
    <scope>NUCLEOTIDE SEQUENCE [MRNA]</scope>
</reference>
<reference key="2">
    <citation type="journal article" date="1998" name="DNA Res.">
        <title>Structural analysis of Arabidopsis thaliana chromosome 5. IV. Sequence features of the regions of 1,456,315 bp covered by nineteen physically assigned P1 and TAC clones.</title>
        <authorList>
            <person name="Sato S."/>
            <person name="Kaneko T."/>
            <person name="Kotani H."/>
            <person name="Nakamura Y."/>
            <person name="Asamizu E."/>
            <person name="Miyajima N."/>
            <person name="Tabata S."/>
        </authorList>
    </citation>
    <scope>NUCLEOTIDE SEQUENCE [LARGE SCALE GENOMIC DNA]</scope>
    <source>
        <strain>cv. Columbia</strain>
    </source>
</reference>
<reference key="3">
    <citation type="journal article" date="2017" name="Plant J.">
        <title>Araport11: a complete reannotation of the Arabidopsis thaliana reference genome.</title>
        <authorList>
            <person name="Cheng C.Y."/>
            <person name="Krishnakumar V."/>
            <person name="Chan A.P."/>
            <person name="Thibaud-Nissen F."/>
            <person name="Schobel S."/>
            <person name="Town C.D."/>
        </authorList>
    </citation>
    <scope>GENOME REANNOTATION</scope>
    <source>
        <strain>cv. Columbia</strain>
    </source>
</reference>
<reference key="4">
    <citation type="submission" date="2006-02" db="EMBL/GenBank/DDBJ databases">
        <title>Arabidopsis ORF clones.</title>
        <authorList>
            <person name="Shinn P."/>
            <person name="Chen H."/>
            <person name="Kim C.J."/>
            <person name="Ecker J.R."/>
        </authorList>
    </citation>
    <scope>NUCLEOTIDE SEQUENCE [LARGE SCALE MRNA]</scope>
    <source>
        <strain>cv. Columbia</strain>
    </source>
</reference>
<reference key="5">
    <citation type="submission" date="2006-07" db="EMBL/GenBank/DDBJ databases">
        <title>Large-scale analysis of RIKEN Arabidopsis full-length (RAFL) cDNAs.</title>
        <authorList>
            <person name="Totoki Y."/>
            <person name="Seki M."/>
            <person name="Ishida J."/>
            <person name="Nakajima M."/>
            <person name="Enju A."/>
            <person name="Kamiya A."/>
            <person name="Narusaka M."/>
            <person name="Shin-i T."/>
            <person name="Nakagawa M."/>
            <person name="Sakamoto N."/>
            <person name="Oishi K."/>
            <person name="Kohara Y."/>
            <person name="Kobayashi M."/>
            <person name="Toyoda A."/>
            <person name="Sakaki Y."/>
            <person name="Sakurai T."/>
            <person name="Iida K."/>
            <person name="Akiyama K."/>
            <person name="Satou M."/>
            <person name="Toyoda T."/>
            <person name="Konagaya A."/>
            <person name="Carninci P."/>
            <person name="Kawai J."/>
            <person name="Hayashizaki Y."/>
            <person name="Shinozaki K."/>
        </authorList>
    </citation>
    <scope>NUCLEOTIDE SEQUENCE [LARGE SCALE MRNA]</scope>
    <source>
        <strain>cv. Columbia</strain>
    </source>
</reference>
<reference key="6">
    <citation type="journal article" date="2009" name="Mol. Plant">
        <title>Comparative genomic study of the thioredoxin family in photosynthetic organisms with emphasis on Populus trichocarpa.</title>
        <authorList>
            <person name="Chibani K."/>
            <person name="Wingsle G."/>
            <person name="Jacquot J.P."/>
            <person name="Gelhaye E."/>
            <person name="Rouhier N."/>
        </authorList>
    </citation>
    <scope>GENE FAMILY</scope>
    <scope>NOMENCLATURE</scope>
</reference>
<reference key="7">
    <citation type="journal article" date="2009" name="Plant Physiol.">
        <title>A small family of chloroplast atypical thioredoxins.</title>
        <authorList>
            <person name="Dangoor I."/>
            <person name="Peled-Zehavi H."/>
            <person name="Levitan A."/>
            <person name="Pasand O."/>
            <person name="Danon A."/>
        </authorList>
    </citation>
    <scope>SUBCELLULAR LOCATION</scope>
</reference>
<name>TRL12_ARATH</name>
<feature type="transit peptide" description="Chloroplast" evidence="1">
    <location>
        <begin position="1"/>
        <end position="92"/>
    </location>
</feature>
<feature type="chain" id="PRO_0000034168" description="Thioredoxin-like 1-2, chloroplastic">
    <location>
        <begin position="93"/>
        <end position="245"/>
    </location>
</feature>
<feature type="domain" description="Thioredoxin" evidence="2">
    <location>
        <begin position="93"/>
        <end position="194"/>
    </location>
</feature>
<feature type="active site" description="Nucleophile" evidence="1">
    <location>
        <position position="117"/>
    </location>
</feature>
<feature type="active site" description="Nucleophile" evidence="1">
    <location>
        <position position="120"/>
    </location>
</feature>
<feature type="disulfide bond" description="Redox-active" evidence="2">
    <location>
        <begin position="117"/>
        <end position="120"/>
    </location>
</feature>
<accession>Q9XFI1</accession>
<accession>Q2HIW4</accession>
<evidence type="ECO:0000255" key="1"/>
<evidence type="ECO:0000255" key="2">
    <source>
        <dbReference type="PROSITE-ProRule" id="PRU00691"/>
    </source>
</evidence>
<evidence type="ECO:0000269" key="3">
    <source>
    </source>
</evidence>
<evidence type="ECO:0000305" key="4"/>
<comment type="function">
    <text>Probable thiol-disulfide oxidoreductase that may participate in various redox reactions.</text>
</comment>
<comment type="subcellular location">
    <subcellularLocation>
        <location evidence="3">Plastid</location>
        <location evidence="3">Chloroplast</location>
    </subcellularLocation>
</comment>
<comment type="similarity">
    <text evidence="4">Belongs to the thioredoxin family.</text>
</comment>
<comment type="caution">
    <text evidence="4">The active site contains a CGGC motif which differs from the conserved CGPC motif.</text>
</comment>
<keyword id="KW-0150">Chloroplast</keyword>
<keyword id="KW-1015">Disulfide bond</keyword>
<keyword id="KW-0249">Electron transport</keyword>
<keyword id="KW-0934">Plastid</keyword>
<keyword id="KW-0676">Redox-active center</keyword>
<keyword id="KW-1185">Reference proteome</keyword>
<keyword id="KW-0809">Transit peptide</keyword>
<keyword id="KW-0813">Transport</keyword>
<gene>
    <name type="ordered locus">At5g61440</name>
    <name type="ORF">MFB13.23</name>
</gene>
<organism>
    <name type="scientific">Arabidopsis thaliana</name>
    <name type="common">Mouse-ear cress</name>
    <dbReference type="NCBI Taxonomy" id="3702"/>
    <lineage>
        <taxon>Eukaryota</taxon>
        <taxon>Viridiplantae</taxon>
        <taxon>Streptophyta</taxon>
        <taxon>Embryophyta</taxon>
        <taxon>Tracheophyta</taxon>
        <taxon>Spermatophyta</taxon>
        <taxon>Magnoliopsida</taxon>
        <taxon>eudicotyledons</taxon>
        <taxon>Gunneridae</taxon>
        <taxon>Pentapetalae</taxon>
        <taxon>rosids</taxon>
        <taxon>malvids</taxon>
        <taxon>Brassicales</taxon>
        <taxon>Brassicaceae</taxon>
        <taxon>Camelineae</taxon>
        <taxon>Arabidopsis</taxon>
    </lineage>
</organism>
<sequence length="245" mass="26890">MDAISSLGTNCVLSGVSPFSQENQSKSKLSPFMSLDLKEHPMASADFTNQTLTAFSSSSASPFQAKTSSIGMSRGMRWWEKSTNHNMLEIQSANHLVDSLLNAGDRLVVLDFYSPGCGGCKSLHPKICQLAETNPNVMFLKVNQEELRTMCHGLNVHVLPFFKFYRGAEGKVCSFSCTIATINKFKKALDKHGSERCSLGDAKGLDEKELAALASVGELKMNSLTMHQASNIGYKTEEQYQTMVL</sequence>
<protein>
    <recommendedName>
        <fullName>Thioredoxin-like 1-2, chloroplastic</fullName>
    </recommendedName>
    <alternativeName>
        <fullName>Atypical cysteine/histidine-rich thioredoxin 5</fullName>
        <shortName>AtACHT5</shortName>
    </alternativeName>
    <alternativeName>
        <fullName>Lilium-type thioredoxin 1-2</fullName>
    </alternativeName>
</protein>
<dbReference type="EMBL" id="AF144389">
    <property type="protein sequence ID" value="AAD35007.1"/>
    <property type="molecule type" value="mRNA"/>
</dbReference>
<dbReference type="EMBL" id="AB010073">
    <property type="protein sequence ID" value="BAB08500.1"/>
    <property type="molecule type" value="Genomic_DNA"/>
</dbReference>
<dbReference type="EMBL" id="CP002688">
    <property type="protein sequence ID" value="AED97469.1"/>
    <property type="molecule type" value="Genomic_DNA"/>
</dbReference>
<dbReference type="EMBL" id="BT024467">
    <property type="protein sequence ID" value="ABD19648.1"/>
    <property type="molecule type" value="mRNA"/>
</dbReference>
<dbReference type="EMBL" id="AK229043">
    <property type="protein sequence ID" value="BAF00926.1"/>
    <property type="molecule type" value="mRNA"/>
</dbReference>
<dbReference type="SMR" id="Q9XFI1"/>
<dbReference type="FunCoup" id="Q9XFI1">
    <property type="interactions" value="2"/>
</dbReference>
<dbReference type="STRING" id="3702.Q9XFI1"/>
<dbReference type="PaxDb" id="3702-AT5G61440.1"/>
<dbReference type="ProteomicsDB" id="245233"/>
<dbReference type="EnsemblPlants" id="AT5G61440.1">
    <property type="protein sequence ID" value="AT5G61440.1"/>
    <property type="gene ID" value="AT5G61440"/>
</dbReference>
<dbReference type="Gramene" id="AT5G61440.1">
    <property type="protein sequence ID" value="AT5G61440.1"/>
    <property type="gene ID" value="AT5G61440"/>
</dbReference>
<dbReference type="KEGG" id="ath:AT5G61440"/>
<dbReference type="Araport" id="AT5G61440"/>
<dbReference type="TAIR" id="AT5G61440">
    <property type="gene designation" value="ACHT5"/>
</dbReference>
<dbReference type="eggNOG" id="KOG0907">
    <property type="taxonomic scope" value="Eukaryota"/>
</dbReference>
<dbReference type="HOGENOM" id="CLU_055041_0_0_1"/>
<dbReference type="InParanoid" id="Q9XFI1"/>
<dbReference type="OMA" id="FPVMSLD"/>
<dbReference type="OrthoDB" id="2121326at2759"/>
<dbReference type="PhylomeDB" id="Q9XFI1"/>
<dbReference type="PRO" id="PR:Q9XFI1"/>
<dbReference type="Proteomes" id="UP000006548">
    <property type="component" value="Chromosome 5"/>
</dbReference>
<dbReference type="ExpressionAtlas" id="Q9XFI1">
    <property type="expression patterns" value="baseline and differential"/>
</dbReference>
<dbReference type="GO" id="GO:0009507">
    <property type="term" value="C:chloroplast"/>
    <property type="evidence" value="ECO:0000314"/>
    <property type="project" value="TAIR"/>
</dbReference>
<dbReference type="CDD" id="cd02947">
    <property type="entry name" value="TRX_family"/>
    <property type="match status" value="1"/>
</dbReference>
<dbReference type="FunFam" id="3.40.30.10:FF:000199">
    <property type="entry name" value="Thioredoxin-like 1-2, chloroplastic"/>
    <property type="match status" value="1"/>
</dbReference>
<dbReference type="Gene3D" id="3.40.30.10">
    <property type="entry name" value="Glutaredoxin"/>
    <property type="match status" value="1"/>
</dbReference>
<dbReference type="InterPro" id="IPR036249">
    <property type="entry name" value="Thioredoxin-like_sf"/>
</dbReference>
<dbReference type="InterPro" id="IPR013766">
    <property type="entry name" value="Thioredoxin_domain"/>
</dbReference>
<dbReference type="PANTHER" id="PTHR43601">
    <property type="entry name" value="THIOREDOXIN, MITOCHONDRIAL"/>
    <property type="match status" value="1"/>
</dbReference>
<dbReference type="PANTHER" id="PTHR43601:SF17">
    <property type="entry name" value="THIOREDOXIN-LIKE 1-2, CHLOROPLASTIC"/>
    <property type="match status" value="1"/>
</dbReference>
<dbReference type="Pfam" id="PF00085">
    <property type="entry name" value="Thioredoxin"/>
    <property type="match status" value="1"/>
</dbReference>
<dbReference type="SUPFAM" id="SSF52833">
    <property type="entry name" value="Thioredoxin-like"/>
    <property type="match status" value="1"/>
</dbReference>
<dbReference type="PROSITE" id="PS51352">
    <property type="entry name" value="THIOREDOXIN_2"/>
    <property type="match status" value="1"/>
</dbReference>
<proteinExistence type="evidence at transcript level"/>